<name>CAPB_STAAU</name>
<reference key="1">
    <citation type="journal article" date="1994" name="J. Bacteriol.">
        <title>Sequence analysis and molecular characterization of genes required for the biosynthesis of type 1 capsular polysaccharide in Staphylococcus aureus.</title>
        <authorList>
            <person name="Lin W.S."/>
            <person name="Cunneen T."/>
            <person name="Lee C.Y."/>
        </authorList>
    </citation>
    <scope>NUCLEOTIDE SEQUENCE [GENOMIC DNA]</scope>
    <source>
        <strain>ATCC 49951 / M / NCTC 10649</strain>
    </source>
</reference>
<accession>P39851</accession>
<proteinExistence type="inferred from homology"/>
<evidence type="ECO:0000305" key="1"/>
<sequence length="228" mass="25176">MAKKKSTISPLYVHDKPKSTISEKFRGIRSNIMFSNAENEIKSLLITSEKSASGKSILSANIAVTYAQAGYKTLIIDGDMRKPTQHYIFDLPNNSGLSNLIINKTTYSDSIKETRVENLNVLTAGPTPPNPSELIASSKFATIFNELLNHYDFIVIDTPPINTVTDAQVYARIVKNCVLVIDAEKNNKSEVKKAKGLLTKAGGKVLGAVLNKMPIDKNSSYYYYYGED</sequence>
<comment type="function">
    <text>Required for the biosynthesis of type 1 capsular polysaccharide.</text>
</comment>
<comment type="catalytic activity">
    <reaction>
        <text>L-tyrosyl-[protein] + ATP = O-phospho-L-tyrosyl-[protein] + ADP + H(+)</text>
        <dbReference type="Rhea" id="RHEA:10596"/>
        <dbReference type="Rhea" id="RHEA-COMP:10136"/>
        <dbReference type="Rhea" id="RHEA-COMP:20101"/>
        <dbReference type="ChEBI" id="CHEBI:15378"/>
        <dbReference type="ChEBI" id="CHEBI:30616"/>
        <dbReference type="ChEBI" id="CHEBI:46858"/>
        <dbReference type="ChEBI" id="CHEBI:61978"/>
        <dbReference type="ChEBI" id="CHEBI:456216"/>
        <dbReference type="EC" id="2.7.10.2"/>
    </reaction>
</comment>
<comment type="pathway">
    <text>Capsule biogenesis; capsule polysaccharide biosynthesis.</text>
</comment>
<comment type="similarity">
    <text evidence="1">Belongs to the CpsD/CapB family.</text>
</comment>
<feature type="chain" id="PRO_0000217234" description="Putative tyrosine-protein kinase CapB">
    <location>
        <begin position="1"/>
        <end position="228"/>
    </location>
</feature>
<dbReference type="EC" id="2.7.10.2"/>
<dbReference type="EMBL" id="U10927">
    <property type="protein sequence ID" value="AAA64641.1"/>
    <property type="molecule type" value="Genomic_DNA"/>
</dbReference>
<dbReference type="RefSeq" id="WP_115294895.1">
    <property type="nucleotide sequence ID" value="NZ_UGZL01000001.1"/>
</dbReference>
<dbReference type="SMR" id="P39851"/>
<dbReference type="TCDB" id="8.A.3.2.1">
    <property type="family name" value="the cytoplasmic membrane-periplasmic auxiliary-1 (mpa1) protein with cytoplasmic (c) domain (mpa1-c or mpa1+c) family"/>
</dbReference>
<dbReference type="UniPathway" id="UPA00934"/>
<dbReference type="GO" id="GO:0005886">
    <property type="term" value="C:plasma membrane"/>
    <property type="evidence" value="ECO:0007669"/>
    <property type="project" value="TreeGrafter"/>
</dbReference>
<dbReference type="GO" id="GO:0005524">
    <property type="term" value="F:ATP binding"/>
    <property type="evidence" value="ECO:0007669"/>
    <property type="project" value="UniProtKB-KW"/>
</dbReference>
<dbReference type="GO" id="GO:0004715">
    <property type="term" value="F:non-membrane spanning protein tyrosine kinase activity"/>
    <property type="evidence" value="ECO:0007669"/>
    <property type="project" value="UniProtKB-EC"/>
</dbReference>
<dbReference type="GO" id="GO:0045227">
    <property type="term" value="P:capsule polysaccharide biosynthetic process"/>
    <property type="evidence" value="ECO:0007669"/>
    <property type="project" value="UniProtKB-UniPathway"/>
</dbReference>
<dbReference type="CDD" id="cd05387">
    <property type="entry name" value="BY-kinase"/>
    <property type="match status" value="1"/>
</dbReference>
<dbReference type="FunFam" id="3.40.50.300:FF:000527">
    <property type="entry name" value="Tyrosine-protein kinase etk"/>
    <property type="match status" value="1"/>
</dbReference>
<dbReference type="Gene3D" id="3.40.50.300">
    <property type="entry name" value="P-loop containing nucleotide triphosphate hydrolases"/>
    <property type="match status" value="1"/>
</dbReference>
<dbReference type="InterPro" id="IPR025669">
    <property type="entry name" value="AAA_dom"/>
</dbReference>
<dbReference type="InterPro" id="IPR050445">
    <property type="entry name" value="Bact_polysacc_biosynth/exp"/>
</dbReference>
<dbReference type="InterPro" id="IPR027417">
    <property type="entry name" value="P-loop_NTPase"/>
</dbReference>
<dbReference type="InterPro" id="IPR005702">
    <property type="entry name" value="Wzc-like_C"/>
</dbReference>
<dbReference type="NCBIfam" id="TIGR01007">
    <property type="entry name" value="eps_fam"/>
    <property type="match status" value="1"/>
</dbReference>
<dbReference type="PANTHER" id="PTHR32309:SF13">
    <property type="entry name" value="FERRIC ENTEROBACTIN TRANSPORT PROTEIN FEPE"/>
    <property type="match status" value="1"/>
</dbReference>
<dbReference type="PANTHER" id="PTHR32309">
    <property type="entry name" value="TYROSINE-PROTEIN KINASE"/>
    <property type="match status" value="1"/>
</dbReference>
<dbReference type="Pfam" id="PF13614">
    <property type="entry name" value="AAA_31"/>
    <property type="match status" value="1"/>
</dbReference>
<dbReference type="SUPFAM" id="SSF52540">
    <property type="entry name" value="P-loop containing nucleoside triphosphate hydrolases"/>
    <property type="match status" value="1"/>
</dbReference>
<gene>
    <name type="primary">capB</name>
</gene>
<protein>
    <recommendedName>
        <fullName>Putative tyrosine-protein kinase CapB</fullName>
        <ecNumber>2.7.10.2</ecNumber>
    </recommendedName>
</protein>
<organism>
    <name type="scientific">Staphylococcus aureus</name>
    <dbReference type="NCBI Taxonomy" id="1280"/>
    <lineage>
        <taxon>Bacteria</taxon>
        <taxon>Bacillati</taxon>
        <taxon>Bacillota</taxon>
        <taxon>Bacilli</taxon>
        <taxon>Bacillales</taxon>
        <taxon>Staphylococcaceae</taxon>
        <taxon>Staphylococcus</taxon>
    </lineage>
</organism>
<keyword id="KW-0067">ATP-binding</keyword>
<keyword id="KW-0972">Capsule biogenesis/degradation</keyword>
<keyword id="KW-0270">Exopolysaccharide synthesis</keyword>
<keyword id="KW-0418">Kinase</keyword>
<keyword id="KW-0547">Nucleotide-binding</keyword>
<keyword id="KW-0808">Transferase</keyword>
<keyword id="KW-0829">Tyrosine-protein kinase</keyword>